<dbReference type="EMBL" id="AF061267">
    <property type="protein sequence ID" value="AAC71712.1"/>
    <property type="molecule type" value="Genomic_DNA"/>
</dbReference>
<dbReference type="PDB" id="5ME4">
    <property type="method" value="X-ray"/>
    <property type="resolution" value="1.52 A"/>
    <property type="chains" value="A=34-298"/>
</dbReference>
<dbReference type="PDB" id="6EMN">
    <property type="method" value="X-ray"/>
    <property type="resolution" value="1.25 A"/>
    <property type="chains" value="A=34-298"/>
</dbReference>
<dbReference type="PDB" id="6GHQ">
    <property type="method" value="X-ray"/>
    <property type="resolution" value="1.53 A"/>
    <property type="chains" value="A=34-298"/>
</dbReference>
<dbReference type="PDB" id="6GHT">
    <property type="method" value="X-ray"/>
    <property type="resolution" value="1.12 A"/>
    <property type="chains" value="A=34-298"/>
</dbReference>
<dbReference type="PDBsum" id="5ME4"/>
<dbReference type="PDBsum" id="6EMN"/>
<dbReference type="PDBsum" id="6GHQ"/>
<dbReference type="PDBsum" id="6GHT"/>
<dbReference type="SMR" id="O69061"/>
<dbReference type="TCDB" id="3.A.1.9.4">
    <property type="family name" value="the atp-binding cassette (abc) superfamily"/>
</dbReference>
<dbReference type="GO" id="GO:0043190">
    <property type="term" value="C:ATP-binding cassette (ABC) transporter complex"/>
    <property type="evidence" value="ECO:0007669"/>
    <property type="project" value="InterPro"/>
</dbReference>
<dbReference type="GO" id="GO:0055085">
    <property type="term" value="P:transmembrane transport"/>
    <property type="evidence" value="ECO:0007669"/>
    <property type="project" value="InterPro"/>
</dbReference>
<dbReference type="CDD" id="cd01071">
    <property type="entry name" value="PBP2_PhnD_like"/>
    <property type="match status" value="1"/>
</dbReference>
<dbReference type="Gene3D" id="3.40.190.10">
    <property type="entry name" value="Periplasmic binding protein-like II"/>
    <property type="match status" value="2"/>
</dbReference>
<dbReference type="InterPro" id="IPR005770">
    <property type="entry name" value="PhnD"/>
</dbReference>
<dbReference type="NCBIfam" id="TIGR01098">
    <property type="entry name" value="3A0109s03R"/>
    <property type="match status" value="1"/>
</dbReference>
<dbReference type="PANTHER" id="PTHR35841">
    <property type="entry name" value="PHOSPHONATES-BINDING PERIPLASMIC PROTEIN"/>
    <property type="match status" value="1"/>
</dbReference>
<dbReference type="PANTHER" id="PTHR35841:SF1">
    <property type="entry name" value="PHOSPHONATES-BINDING PERIPLASMIC PROTEIN"/>
    <property type="match status" value="1"/>
</dbReference>
<dbReference type="Pfam" id="PF12974">
    <property type="entry name" value="Phosphonate-bd"/>
    <property type="match status" value="1"/>
</dbReference>
<dbReference type="SUPFAM" id="SSF53850">
    <property type="entry name" value="Periplasmic binding protein-like II"/>
    <property type="match status" value="1"/>
</dbReference>
<gene>
    <name type="primary">htxB</name>
</gene>
<keyword id="KW-0002">3D-structure</keyword>
<keyword id="KW-0732">Signal</keyword>
<keyword id="KW-0813">Transport</keyword>
<evidence type="ECO:0000255" key="1"/>
<evidence type="ECO:0000305" key="2"/>
<evidence type="ECO:0007829" key="3">
    <source>
        <dbReference type="PDB" id="6GHQ"/>
    </source>
</evidence>
<evidence type="ECO:0007829" key="4">
    <source>
        <dbReference type="PDB" id="6GHT"/>
    </source>
</evidence>
<name>HTXB_STUST</name>
<feature type="signal peptide" evidence="1">
    <location>
        <begin position="1"/>
        <end position="33"/>
    </location>
</feature>
<feature type="chain" id="PRO_0000021466" description="Probable phosphite transport system-binding protein HtxB">
    <location>
        <begin position="34"/>
        <end position="298"/>
    </location>
</feature>
<feature type="strand" evidence="4">
    <location>
        <begin position="35"/>
        <end position="37"/>
    </location>
</feature>
<feature type="strand" evidence="4">
    <location>
        <begin position="40"/>
        <end position="47"/>
    </location>
</feature>
<feature type="strand" evidence="4">
    <location>
        <begin position="51"/>
        <end position="53"/>
    </location>
</feature>
<feature type="helix" evidence="4">
    <location>
        <begin position="54"/>
        <end position="71"/>
    </location>
</feature>
<feature type="strand" evidence="4">
    <location>
        <begin position="75"/>
        <end position="79"/>
    </location>
</feature>
<feature type="helix" evidence="4">
    <location>
        <begin position="84"/>
        <end position="92"/>
    </location>
</feature>
<feature type="strand" evidence="4">
    <location>
        <begin position="97"/>
        <end position="101"/>
    </location>
</feature>
<feature type="helix" evidence="4">
    <location>
        <begin position="103"/>
        <end position="113"/>
    </location>
</feature>
<feature type="strand" evidence="4">
    <location>
        <begin position="116"/>
        <end position="123"/>
    </location>
</feature>
<feature type="strand" evidence="4">
    <location>
        <begin position="126"/>
        <end position="129"/>
    </location>
</feature>
<feature type="strand" evidence="4">
    <location>
        <begin position="131"/>
        <end position="136"/>
    </location>
</feature>
<feature type="turn" evidence="4">
    <location>
        <begin position="142"/>
        <end position="147"/>
    </location>
</feature>
<feature type="strand" evidence="4">
    <location>
        <begin position="152"/>
        <end position="154"/>
    </location>
</feature>
<feature type="turn" evidence="4">
    <location>
        <begin position="161"/>
        <end position="164"/>
    </location>
</feature>
<feature type="helix" evidence="4">
    <location>
        <begin position="165"/>
        <end position="173"/>
    </location>
</feature>
<feature type="helix" evidence="4">
    <location>
        <begin position="178"/>
        <end position="181"/>
    </location>
</feature>
<feature type="strand" evidence="4">
    <location>
        <begin position="182"/>
        <end position="185"/>
    </location>
</feature>
<feature type="helix" evidence="4">
    <location>
        <begin position="190"/>
        <end position="198"/>
    </location>
</feature>
<feature type="strand" evidence="4">
    <location>
        <begin position="203"/>
        <end position="208"/>
    </location>
</feature>
<feature type="helix" evidence="4">
    <location>
        <begin position="209"/>
        <end position="217"/>
    </location>
</feature>
<feature type="helix" evidence="4">
    <location>
        <begin position="223"/>
        <end position="225"/>
    </location>
</feature>
<feature type="strand" evidence="4">
    <location>
        <begin position="226"/>
        <end position="231"/>
    </location>
</feature>
<feature type="strand" evidence="3">
    <location>
        <begin position="235"/>
        <end position="237"/>
    </location>
</feature>
<feature type="strand" evidence="4">
    <location>
        <begin position="239"/>
        <end position="242"/>
    </location>
</feature>
<feature type="helix" evidence="4">
    <location>
        <begin position="248"/>
        <end position="259"/>
    </location>
</feature>
<feature type="helix" evidence="4">
    <location>
        <begin position="263"/>
        <end position="268"/>
    </location>
</feature>
<feature type="strand" evidence="4">
    <location>
        <begin position="274"/>
        <end position="279"/>
    </location>
</feature>
<feature type="helix" evidence="4">
    <location>
        <begin position="282"/>
        <end position="285"/>
    </location>
</feature>
<feature type="helix" evidence="4">
    <location>
        <begin position="286"/>
        <end position="294"/>
    </location>
</feature>
<feature type="turn" evidence="3">
    <location>
        <begin position="295"/>
        <end position="298"/>
    </location>
</feature>
<accession>O69061</accession>
<proteinExistence type="evidence at protein level"/>
<sequence>MQVFTLFSKFKKALTRAILAFIATIIVCTPAQAAEVVNGKLHLRFAIAPMRPTPSQTIKEFEPIFKYLADQLGATYEIVSPESWAAISVAMTNGHVDVGWLGPWGYVLSNKKAGTEVLATVKYRGEPFYKALIVGRADLPIKKWPEDAKGLKLSLSDQGNTSGWLIPMAYFKSIGIDPASYFEYREGATFGQNESQIQHGLIDLGSDMDRGRNGMIEAGQIDPSKSKIVWESSKLPNDAISVPKDFDPALKARITEILTSLSEEKAQSLMGSGYNGFVKAKHSDYKVIEDAGRILGKL</sequence>
<reference key="1">
    <citation type="journal article" date="1998" name="J. Bacteriol.">
        <title>Molecular genetic analysis of phosphite and hypophosphite oxidation by Pseudomonas stutzeri WM88.</title>
        <authorList>
            <person name="Metcalf W.W."/>
            <person name="Wolfe R.S."/>
        </authorList>
    </citation>
    <scope>NUCLEOTIDE SEQUENCE [GENOMIC DNA]</scope>
    <source>
        <strain>WM88</strain>
    </source>
</reference>
<comment type="function">
    <text>Probably forms part of a binding-protein-dependent hypophosphite transporter.</text>
</comment>
<comment type="similarity">
    <text evidence="2">Belongs to the phosphate/phosphite/phosphonate binding protein family.</text>
</comment>
<organism>
    <name type="scientific">Stutzerimonas stutzeri</name>
    <name type="common">Pseudomonas stutzeri</name>
    <dbReference type="NCBI Taxonomy" id="316"/>
    <lineage>
        <taxon>Bacteria</taxon>
        <taxon>Pseudomonadati</taxon>
        <taxon>Pseudomonadota</taxon>
        <taxon>Gammaproteobacteria</taxon>
        <taxon>Pseudomonadales</taxon>
        <taxon>Pseudomonadaceae</taxon>
        <taxon>Stutzerimonas</taxon>
    </lineage>
</organism>
<protein>
    <recommendedName>
        <fullName>Probable phosphite transport system-binding protein HtxB</fullName>
    </recommendedName>
</protein>